<name>YR096_MIMIV</name>
<protein>
    <recommendedName>
        <fullName>Putative ankyrin repeat protein R96</fullName>
    </recommendedName>
</protein>
<proteinExistence type="predicted"/>
<feature type="chain" id="PRO_0000067153" description="Putative ankyrin repeat protein R96">
    <location>
        <begin position="1"/>
        <end position="1015"/>
    </location>
</feature>
<feature type="repeat" description="ANK 1">
    <location>
        <begin position="136"/>
        <end position="165"/>
    </location>
</feature>
<feature type="repeat" description="ANK 2">
    <location>
        <begin position="168"/>
        <end position="201"/>
    </location>
</feature>
<feature type="repeat" description="ANK 3">
    <location>
        <begin position="202"/>
        <end position="231"/>
    </location>
</feature>
<feature type="repeat" description="ANK 4">
    <location>
        <begin position="340"/>
        <end position="370"/>
    </location>
</feature>
<feature type="repeat" description="ANK 5">
    <location>
        <begin position="374"/>
        <end position="403"/>
    </location>
</feature>
<feature type="repeat" description="ANK 6">
    <location>
        <begin position="456"/>
        <end position="485"/>
    </location>
</feature>
<feature type="repeat" description="ANK 7">
    <location>
        <begin position="498"/>
        <end position="527"/>
    </location>
</feature>
<feature type="repeat" description="ANK 8">
    <location>
        <begin position="535"/>
        <end position="564"/>
    </location>
</feature>
<feature type="region of interest" description="Disordered" evidence="1">
    <location>
        <begin position="1"/>
        <end position="37"/>
    </location>
</feature>
<feature type="compositionally biased region" description="Basic residues" evidence="1">
    <location>
        <begin position="1"/>
        <end position="14"/>
    </location>
</feature>
<evidence type="ECO:0000256" key="1">
    <source>
        <dbReference type="SAM" id="MobiDB-lite"/>
    </source>
</evidence>
<sequence length="1015" mass="118433">MSTVKKSSKKKSSKKSSSGNESSKKSSPKIVPKHTAKNLPKPIKNFEIDLDKCANCPGCLTYLSFIRQVENIIQQNSSRSTTTQLIVKLISNFVWKYRFTYEQIAVNLFKYKFKERGYLVKILVSLGFDPNNLKINGHKVLKILVYENDIPSIIALVENGANIDFGKAPSNILHICASRNYPVLLKYALSRNEIDINAVNIDGRSPLYLACLYLNKECIKILLDNGADVEVCTPDEKTCCLELIIFLGNIMHNNLEVYTEIYQRYGDKYSDNISELVGNIVDALKYIISAKNNMSRQEIYTIRNLCFNKPIVMNEKIVFDLFVFIMDKFPKIVYNKFTHLGHNAINTSIMFCNNSLIKYFVDKTDLDFQAINNNITNPIQMLVNHGYIDYVETILNRNPKIVSTKCRYNNNLLHYTLMPCYVYSNVPRIKSDKDIIELVKIFANNKKINQNHRNNSGYRPIEVAIRYCSIDVIKELLKYNTTIFAENRIKQQLFPVLNNNDIISFATQLGRFDVVTYLIQENVQFQLYQIDDIHTVPTALLIAIVYHRKNFIQFFLELPQITDCLNNDVTKEYVINFANMYSNYNVQITDTYNLNFIGNDKMSFTHRIDRMIHFYSVHYGYSKMVILSGLSTILSLLEKICLASKKCKNYRNLPNSKFLEATIFSNGPCDLTFRNEFSNLYTDINLLNYMNDSKFFDNIVEIIGDLIEYPILLDIFEYMFAVRDLPISSQPIIKFIESLGLINQSNKIIKINKIVNELLNKSEISIDLNDQDTHNYDDYVENDPEFDSDEFDTDEFSDEAIKDFFGLDNKNLLTDKTSSPIKPIKNNQKENFNKKIDKYRVENMLHKFCRGEKLPHYDIIYKCLMQTDYYQILDNKIVVHNNEIILAVIYKLKSSDSTNSQMSHKPSVKTNPSDWIKSYSTNICSPNKQDHYHMFPFVLDWILYKWSCVEFQTKDKIYPTEFNTHLYFYGELNTNGRMVKGCFEYFLNCHKSLYHRLFHEIDRVPPQIQRKIYNH</sequence>
<organism>
    <name type="scientific">Acanthamoeba polyphaga mimivirus</name>
    <name type="common">APMV</name>
    <dbReference type="NCBI Taxonomy" id="212035"/>
    <lineage>
        <taxon>Viruses</taxon>
        <taxon>Varidnaviria</taxon>
        <taxon>Bamfordvirae</taxon>
        <taxon>Nucleocytoviricota</taxon>
        <taxon>Megaviricetes</taxon>
        <taxon>Imitervirales</taxon>
        <taxon>Mimiviridae</taxon>
        <taxon>Megamimivirinae</taxon>
        <taxon>Mimivirus</taxon>
        <taxon>Mimivirus bradfordmassiliense</taxon>
    </lineage>
</organism>
<reference key="1">
    <citation type="journal article" date="2004" name="Science">
        <title>The 1.2-megabase genome sequence of Mimivirus.</title>
        <authorList>
            <person name="Raoult D."/>
            <person name="Audic S."/>
            <person name="Robert C."/>
            <person name="Abergel C."/>
            <person name="Renesto P."/>
            <person name="Ogata H."/>
            <person name="La Scola B."/>
            <person name="Susan M."/>
            <person name="Claverie J.-M."/>
        </authorList>
    </citation>
    <scope>NUCLEOTIDE SEQUENCE [LARGE SCALE GENOMIC DNA]</scope>
    <source>
        <strain>Rowbotham-Bradford</strain>
    </source>
</reference>
<keyword id="KW-0040">ANK repeat</keyword>
<keyword id="KW-1185">Reference proteome</keyword>
<keyword id="KW-0677">Repeat</keyword>
<dbReference type="EMBL" id="AY653733">
    <property type="protein sequence ID" value="AAV50371.1"/>
    <property type="molecule type" value="Genomic_DNA"/>
</dbReference>
<dbReference type="SMR" id="Q5UPH4"/>
<dbReference type="KEGG" id="vg:9924693"/>
<dbReference type="OrthoDB" id="4318at10239"/>
<dbReference type="Proteomes" id="UP000001134">
    <property type="component" value="Genome"/>
</dbReference>
<dbReference type="Gene3D" id="1.25.40.20">
    <property type="entry name" value="Ankyrin repeat-containing domain"/>
    <property type="match status" value="2"/>
</dbReference>
<dbReference type="InterPro" id="IPR002110">
    <property type="entry name" value="Ankyrin_rpt"/>
</dbReference>
<dbReference type="InterPro" id="IPR036770">
    <property type="entry name" value="Ankyrin_rpt-contain_sf"/>
</dbReference>
<dbReference type="PANTHER" id="PTHR24198">
    <property type="entry name" value="ANKYRIN REPEAT AND PROTEIN KINASE DOMAIN-CONTAINING PROTEIN"/>
    <property type="match status" value="1"/>
</dbReference>
<dbReference type="PANTHER" id="PTHR24198:SF165">
    <property type="entry name" value="ANKYRIN REPEAT-CONTAINING PROTEIN-RELATED"/>
    <property type="match status" value="1"/>
</dbReference>
<dbReference type="Pfam" id="PF12796">
    <property type="entry name" value="Ank_2"/>
    <property type="match status" value="1"/>
</dbReference>
<dbReference type="SMART" id="SM00248">
    <property type="entry name" value="ANK"/>
    <property type="match status" value="6"/>
</dbReference>
<dbReference type="SUPFAM" id="SSF48403">
    <property type="entry name" value="Ankyrin repeat"/>
    <property type="match status" value="2"/>
</dbReference>
<dbReference type="PROSITE" id="PS50297">
    <property type="entry name" value="ANK_REP_REGION"/>
    <property type="match status" value="2"/>
</dbReference>
<dbReference type="PROSITE" id="PS50088">
    <property type="entry name" value="ANK_REPEAT"/>
    <property type="match status" value="1"/>
</dbReference>
<accession>Q5UPH4</accession>
<gene>
    <name type="ordered locus">MIMI_R96</name>
</gene>
<organismHost>
    <name type="scientific">Acanthamoeba polyphaga</name>
    <name type="common">Amoeba</name>
    <dbReference type="NCBI Taxonomy" id="5757"/>
</organismHost>